<feature type="chain" id="PRO_0000437961" description="Trissin receptor">
    <location>
        <begin position="1"/>
        <end position="669"/>
    </location>
</feature>
<feature type="topological domain" description="Extracellular" evidence="6">
    <location>
        <begin position="1"/>
        <end position="184"/>
    </location>
</feature>
<feature type="transmembrane region" description="Helical; Name=1" evidence="1">
    <location>
        <begin position="185"/>
        <end position="205"/>
    </location>
</feature>
<feature type="topological domain" description="Cytoplasmic" evidence="6">
    <location>
        <begin position="206"/>
        <end position="217"/>
    </location>
</feature>
<feature type="transmembrane region" description="Helical; Name=2" evidence="1">
    <location>
        <begin position="218"/>
        <end position="238"/>
    </location>
</feature>
<feature type="topological domain" description="Extracellular" evidence="6">
    <location>
        <begin position="239"/>
        <end position="269"/>
    </location>
</feature>
<feature type="transmembrane region" description="Helical; Name=3" evidence="1">
    <location>
        <begin position="270"/>
        <end position="290"/>
    </location>
</feature>
<feature type="topological domain" description="Cytoplasmic" evidence="6">
    <location>
        <begin position="291"/>
        <end position="302"/>
    </location>
</feature>
<feature type="transmembrane region" description="Helical; Name=4" evidence="1">
    <location>
        <begin position="303"/>
        <end position="323"/>
    </location>
</feature>
<feature type="topological domain" description="Extracellular" evidence="6">
    <location>
        <begin position="324"/>
        <end position="350"/>
    </location>
</feature>
<feature type="transmembrane region" description="Helical; Name=5" evidence="1">
    <location>
        <begin position="351"/>
        <end position="371"/>
    </location>
</feature>
<feature type="topological domain" description="Cytoplasmic" evidence="6">
    <location>
        <begin position="372"/>
        <end position="552"/>
    </location>
</feature>
<feature type="transmembrane region" description="Helical; Name=6" evidence="1">
    <location>
        <begin position="553"/>
        <end position="573"/>
    </location>
</feature>
<feature type="topological domain" description="Extracellular" evidence="6">
    <location>
        <begin position="574"/>
        <end position="595"/>
    </location>
</feature>
<feature type="transmembrane region" description="Helical; Name=7" evidence="1">
    <location>
        <begin position="596"/>
        <end position="616"/>
    </location>
</feature>
<feature type="topological domain" description="Cytoplasmic" evidence="6">
    <location>
        <begin position="617"/>
        <end position="669"/>
    </location>
</feature>
<feature type="region of interest" description="Disordered" evidence="4">
    <location>
        <begin position="1"/>
        <end position="90"/>
    </location>
</feature>
<feature type="region of interest" description="Disordered" evidence="4">
    <location>
        <begin position="390"/>
        <end position="481"/>
    </location>
</feature>
<feature type="region of interest" description="Disordered" evidence="4">
    <location>
        <begin position="515"/>
        <end position="537"/>
    </location>
</feature>
<feature type="region of interest" description="Disordered" evidence="4">
    <location>
        <begin position="635"/>
        <end position="669"/>
    </location>
</feature>
<feature type="compositionally biased region" description="Polar residues" evidence="4">
    <location>
        <begin position="1"/>
        <end position="15"/>
    </location>
</feature>
<feature type="compositionally biased region" description="Low complexity" evidence="4">
    <location>
        <begin position="55"/>
        <end position="74"/>
    </location>
</feature>
<feature type="compositionally biased region" description="Pro residues" evidence="4">
    <location>
        <begin position="79"/>
        <end position="89"/>
    </location>
</feature>
<feature type="compositionally biased region" description="Low complexity" evidence="4">
    <location>
        <begin position="390"/>
        <end position="401"/>
    </location>
</feature>
<feature type="compositionally biased region" description="Basic residues" evidence="4">
    <location>
        <begin position="414"/>
        <end position="429"/>
    </location>
</feature>
<feature type="compositionally biased region" description="Gly residues" evidence="4">
    <location>
        <begin position="441"/>
        <end position="454"/>
    </location>
</feature>
<feature type="compositionally biased region" description="Low complexity" evidence="4">
    <location>
        <begin position="455"/>
        <end position="470"/>
    </location>
</feature>
<feature type="compositionally biased region" description="Gly residues" evidence="4">
    <location>
        <begin position="524"/>
        <end position="534"/>
    </location>
</feature>
<feature type="compositionally biased region" description="Polar residues" evidence="4">
    <location>
        <begin position="653"/>
        <end position="669"/>
    </location>
</feature>
<feature type="glycosylation site" description="N-linked (GlcNAc...) asparagine" evidence="2">
    <location>
        <position position="66"/>
    </location>
</feature>
<feature type="glycosylation site" description="N-linked (GlcNAc...) asparagine" evidence="2">
    <location>
        <position position="120"/>
    </location>
</feature>
<feature type="glycosylation site" description="N-linked (GlcNAc...) asparagine" evidence="2">
    <location>
        <position position="130"/>
    </location>
</feature>
<feature type="glycosylation site" description="N-linked (GlcNAc...) asparagine" evidence="2">
    <location>
        <position position="241"/>
    </location>
</feature>
<feature type="disulfide bond" evidence="3">
    <location>
        <begin position="257"/>
        <end position="340"/>
    </location>
</feature>
<proteinExistence type="evidence at transcript level"/>
<name>TRISR_DROME</name>
<reference evidence="10" key="1">
    <citation type="journal article" date="2000" name="Science">
        <title>The genome sequence of Drosophila melanogaster.</title>
        <authorList>
            <person name="Adams M.D."/>
            <person name="Celniker S.E."/>
            <person name="Holt R.A."/>
            <person name="Evans C.A."/>
            <person name="Gocayne J.D."/>
            <person name="Amanatides P.G."/>
            <person name="Scherer S.E."/>
            <person name="Li P.W."/>
            <person name="Hoskins R.A."/>
            <person name="Galle R.F."/>
            <person name="George R.A."/>
            <person name="Lewis S.E."/>
            <person name="Richards S."/>
            <person name="Ashburner M."/>
            <person name="Henderson S.N."/>
            <person name="Sutton G.G."/>
            <person name="Wortman J.R."/>
            <person name="Yandell M.D."/>
            <person name="Zhang Q."/>
            <person name="Chen L.X."/>
            <person name="Brandon R.C."/>
            <person name="Rogers Y.-H.C."/>
            <person name="Blazej R.G."/>
            <person name="Champe M."/>
            <person name="Pfeiffer B.D."/>
            <person name="Wan K.H."/>
            <person name="Doyle C."/>
            <person name="Baxter E.G."/>
            <person name="Helt G."/>
            <person name="Nelson C.R."/>
            <person name="Miklos G.L.G."/>
            <person name="Abril J.F."/>
            <person name="Agbayani A."/>
            <person name="An H.-J."/>
            <person name="Andrews-Pfannkoch C."/>
            <person name="Baldwin D."/>
            <person name="Ballew R.M."/>
            <person name="Basu A."/>
            <person name="Baxendale J."/>
            <person name="Bayraktaroglu L."/>
            <person name="Beasley E.M."/>
            <person name="Beeson K.Y."/>
            <person name="Benos P.V."/>
            <person name="Berman B.P."/>
            <person name="Bhandari D."/>
            <person name="Bolshakov S."/>
            <person name="Borkova D."/>
            <person name="Botchan M.R."/>
            <person name="Bouck J."/>
            <person name="Brokstein P."/>
            <person name="Brottier P."/>
            <person name="Burtis K.C."/>
            <person name="Busam D.A."/>
            <person name="Butler H."/>
            <person name="Cadieu E."/>
            <person name="Center A."/>
            <person name="Chandra I."/>
            <person name="Cherry J.M."/>
            <person name="Cawley S."/>
            <person name="Dahlke C."/>
            <person name="Davenport L.B."/>
            <person name="Davies P."/>
            <person name="de Pablos B."/>
            <person name="Delcher A."/>
            <person name="Deng Z."/>
            <person name="Mays A.D."/>
            <person name="Dew I."/>
            <person name="Dietz S.M."/>
            <person name="Dodson K."/>
            <person name="Doup L.E."/>
            <person name="Downes M."/>
            <person name="Dugan-Rocha S."/>
            <person name="Dunkov B.C."/>
            <person name="Dunn P."/>
            <person name="Durbin K.J."/>
            <person name="Evangelista C.C."/>
            <person name="Ferraz C."/>
            <person name="Ferriera S."/>
            <person name="Fleischmann W."/>
            <person name="Fosler C."/>
            <person name="Gabrielian A.E."/>
            <person name="Garg N.S."/>
            <person name="Gelbart W.M."/>
            <person name="Glasser K."/>
            <person name="Glodek A."/>
            <person name="Gong F."/>
            <person name="Gorrell J.H."/>
            <person name="Gu Z."/>
            <person name="Guan P."/>
            <person name="Harris M."/>
            <person name="Harris N.L."/>
            <person name="Harvey D.A."/>
            <person name="Heiman T.J."/>
            <person name="Hernandez J.R."/>
            <person name="Houck J."/>
            <person name="Hostin D."/>
            <person name="Houston K.A."/>
            <person name="Howland T.J."/>
            <person name="Wei M.-H."/>
            <person name="Ibegwam C."/>
            <person name="Jalali M."/>
            <person name="Kalush F."/>
            <person name="Karpen G.H."/>
            <person name="Ke Z."/>
            <person name="Kennison J.A."/>
            <person name="Ketchum K.A."/>
            <person name="Kimmel B.E."/>
            <person name="Kodira C.D."/>
            <person name="Kraft C.L."/>
            <person name="Kravitz S."/>
            <person name="Kulp D."/>
            <person name="Lai Z."/>
            <person name="Lasko P."/>
            <person name="Lei Y."/>
            <person name="Levitsky A.A."/>
            <person name="Li J.H."/>
            <person name="Li Z."/>
            <person name="Liang Y."/>
            <person name="Lin X."/>
            <person name="Liu X."/>
            <person name="Mattei B."/>
            <person name="McIntosh T.C."/>
            <person name="McLeod M.P."/>
            <person name="McPherson D."/>
            <person name="Merkulov G."/>
            <person name="Milshina N.V."/>
            <person name="Mobarry C."/>
            <person name="Morris J."/>
            <person name="Moshrefi A."/>
            <person name="Mount S.M."/>
            <person name="Moy M."/>
            <person name="Murphy B."/>
            <person name="Murphy L."/>
            <person name="Muzny D.M."/>
            <person name="Nelson D.L."/>
            <person name="Nelson D.R."/>
            <person name="Nelson K.A."/>
            <person name="Nixon K."/>
            <person name="Nusskern D.R."/>
            <person name="Pacleb J.M."/>
            <person name="Palazzolo M."/>
            <person name="Pittman G.S."/>
            <person name="Pan S."/>
            <person name="Pollard J."/>
            <person name="Puri V."/>
            <person name="Reese M.G."/>
            <person name="Reinert K."/>
            <person name="Remington K."/>
            <person name="Saunders R.D.C."/>
            <person name="Scheeler F."/>
            <person name="Shen H."/>
            <person name="Shue B.C."/>
            <person name="Siden-Kiamos I."/>
            <person name="Simpson M."/>
            <person name="Skupski M.P."/>
            <person name="Smith T.J."/>
            <person name="Spier E."/>
            <person name="Spradling A.C."/>
            <person name="Stapleton M."/>
            <person name="Strong R."/>
            <person name="Sun E."/>
            <person name="Svirskas R."/>
            <person name="Tector C."/>
            <person name="Turner R."/>
            <person name="Venter E."/>
            <person name="Wang A.H."/>
            <person name="Wang X."/>
            <person name="Wang Z.-Y."/>
            <person name="Wassarman D.A."/>
            <person name="Weinstock G.M."/>
            <person name="Weissenbach J."/>
            <person name="Williams S.M."/>
            <person name="Woodage T."/>
            <person name="Worley K.C."/>
            <person name="Wu D."/>
            <person name="Yang S."/>
            <person name="Yao Q.A."/>
            <person name="Ye J."/>
            <person name="Yeh R.-F."/>
            <person name="Zaveri J.S."/>
            <person name="Zhan M."/>
            <person name="Zhang G."/>
            <person name="Zhao Q."/>
            <person name="Zheng L."/>
            <person name="Zheng X.H."/>
            <person name="Zhong F.N."/>
            <person name="Zhong W."/>
            <person name="Zhou X."/>
            <person name="Zhu S.C."/>
            <person name="Zhu X."/>
            <person name="Smith H.O."/>
            <person name="Gibbs R.A."/>
            <person name="Myers E.W."/>
            <person name="Rubin G.M."/>
            <person name="Venter J.C."/>
        </authorList>
    </citation>
    <scope>NUCLEOTIDE SEQUENCE [LARGE SCALE GENOMIC DNA]</scope>
    <source>
        <strain evidence="10">Berkeley</strain>
    </source>
</reference>
<reference evidence="10" key="2">
    <citation type="journal article" date="2002" name="Genome Biol.">
        <title>Annotation of the Drosophila melanogaster euchromatic genome: a systematic review.</title>
        <authorList>
            <person name="Misra S."/>
            <person name="Crosby M.A."/>
            <person name="Mungall C.J."/>
            <person name="Matthews B.B."/>
            <person name="Campbell K.S."/>
            <person name="Hradecky P."/>
            <person name="Huang Y."/>
            <person name="Kaminker J.S."/>
            <person name="Millburn G.H."/>
            <person name="Prochnik S.E."/>
            <person name="Smith C.D."/>
            <person name="Tupy J.L."/>
            <person name="Whitfield E.J."/>
            <person name="Bayraktaroglu L."/>
            <person name="Berman B.P."/>
            <person name="Bettencourt B.R."/>
            <person name="Celniker S.E."/>
            <person name="de Grey A.D.N.J."/>
            <person name="Drysdale R.A."/>
            <person name="Harris N.L."/>
            <person name="Richter J."/>
            <person name="Russo S."/>
            <person name="Schroeder A.J."/>
            <person name="Shu S.Q."/>
            <person name="Stapleton M."/>
            <person name="Yamada C."/>
            <person name="Ashburner M."/>
            <person name="Gelbart W.M."/>
            <person name="Rubin G.M."/>
            <person name="Lewis S.E."/>
        </authorList>
    </citation>
    <scope>GENOME REANNOTATION</scope>
    <source>
        <strain evidence="10">Berkeley</strain>
    </source>
</reference>
<reference evidence="8" key="3">
    <citation type="submission" date="2008-11" db="EMBL/GenBank/DDBJ databases">
        <authorList>
            <person name="Carlson J."/>
            <person name="Booth B."/>
            <person name="Frise E."/>
            <person name="Park S."/>
            <person name="Wan K."/>
            <person name="Yu C."/>
            <person name="Celniker S."/>
        </authorList>
    </citation>
    <scope>NUCLEOTIDE SEQUENCE [LARGE SCALE MRNA]</scope>
</reference>
<reference evidence="6" key="4">
    <citation type="journal article" date="2011" name="Biochem. Biophys. Res. Commun.">
        <title>Identification of the endogenous cysteine-rich peptide trissin, a ligand for an orphan G protein-coupled receptor in Drosophila.</title>
        <authorList>
            <person name="Ida T."/>
            <person name="Takahashi T."/>
            <person name="Tominaga H."/>
            <person name="Sato T."/>
            <person name="Kume K."/>
            <person name="Yoshizawa-Kumagaye K."/>
            <person name="Nishio H."/>
            <person name="Kato J."/>
            <person name="Murakami N."/>
            <person name="Miyazato M."/>
            <person name="Kangawa K."/>
            <person name="Kojima M."/>
        </authorList>
    </citation>
    <scope>FUNCTION</scope>
    <scope>SUBCELLULAR LOCATION</scope>
</reference>
<accession>Q9VML9</accession>
<accession>Q9VMM1</accession>
<protein>
    <recommendedName>
        <fullName evidence="9">Trissin receptor</fullName>
    </recommendedName>
</protein>
<keyword id="KW-1003">Cell membrane</keyword>
<keyword id="KW-1015">Disulfide bond</keyword>
<keyword id="KW-0297">G-protein coupled receptor</keyword>
<keyword id="KW-0325">Glycoprotein</keyword>
<keyword id="KW-0472">Membrane</keyword>
<keyword id="KW-0675">Receptor</keyword>
<keyword id="KW-1185">Reference proteome</keyword>
<keyword id="KW-0807">Transducer</keyword>
<keyword id="KW-0812">Transmembrane</keyword>
<keyword id="KW-1133">Transmembrane helix</keyword>
<organism evidence="10">
    <name type="scientific">Drosophila melanogaster</name>
    <name type="common">Fruit fly</name>
    <dbReference type="NCBI Taxonomy" id="7227"/>
    <lineage>
        <taxon>Eukaryota</taxon>
        <taxon>Metazoa</taxon>
        <taxon>Ecdysozoa</taxon>
        <taxon>Arthropoda</taxon>
        <taxon>Hexapoda</taxon>
        <taxon>Insecta</taxon>
        <taxon>Pterygota</taxon>
        <taxon>Neoptera</taxon>
        <taxon>Endopterygota</taxon>
        <taxon>Diptera</taxon>
        <taxon>Brachycera</taxon>
        <taxon>Muscomorpha</taxon>
        <taxon>Ephydroidea</taxon>
        <taxon>Drosophilidae</taxon>
        <taxon>Drosophila</taxon>
        <taxon>Sophophora</taxon>
    </lineage>
</organism>
<dbReference type="EMBL" id="AE014134">
    <property type="protein sequence ID" value="AAF52294.4"/>
    <property type="molecule type" value="Genomic_DNA"/>
</dbReference>
<dbReference type="EMBL" id="BT050585">
    <property type="protein sequence ID" value="ACJ23469.1"/>
    <property type="molecule type" value="mRNA"/>
</dbReference>
<dbReference type="RefSeq" id="NP_001097092.1">
    <property type="nucleotide sequence ID" value="NM_001103622.2"/>
</dbReference>
<dbReference type="FunCoup" id="Q9VML9">
    <property type="interactions" value="91"/>
</dbReference>
<dbReference type="IntAct" id="Q9VML9">
    <property type="interactions" value="2"/>
</dbReference>
<dbReference type="STRING" id="7227.FBpp0111531"/>
<dbReference type="GlyCosmos" id="Q9VML9">
    <property type="glycosylation" value="4 sites, No reported glycans"/>
</dbReference>
<dbReference type="GlyGen" id="Q9VML9">
    <property type="glycosylation" value="4 sites"/>
</dbReference>
<dbReference type="PaxDb" id="7227-FBpp0111531"/>
<dbReference type="DNASU" id="33812"/>
<dbReference type="EnsemblMetazoa" id="FBtr0112619">
    <property type="protein sequence ID" value="FBpp0111531"/>
    <property type="gene ID" value="FBgn0085410"/>
</dbReference>
<dbReference type="GeneID" id="33812"/>
<dbReference type="KEGG" id="dme:Dmel_CG34381"/>
<dbReference type="UCSC" id="CG34381-RA">
    <property type="organism name" value="d. melanogaster"/>
</dbReference>
<dbReference type="AGR" id="FB:FBgn0085410"/>
<dbReference type="CTD" id="33812"/>
<dbReference type="FlyBase" id="FBgn0085410">
    <property type="gene designation" value="TrissinR"/>
</dbReference>
<dbReference type="VEuPathDB" id="VectorBase:FBgn0085410"/>
<dbReference type="eggNOG" id="KOG3656">
    <property type="taxonomic scope" value="Eukaryota"/>
</dbReference>
<dbReference type="InParanoid" id="Q9VML9"/>
<dbReference type="OMA" id="KLEYAQT"/>
<dbReference type="OrthoDB" id="5964776at2759"/>
<dbReference type="PhylomeDB" id="Q9VML9"/>
<dbReference type="Reactome" id="R-DME-416476">
    <property type="pathway name" value="G alpha (q) signalling events"/>
</dbReference>
<dbReference type="BioGRID-ORCS" id="33812">
    <property type="hits" value="0 hits in 1 CRISPR screen"/>
</dbReference>
<dbReference type="ChiTaRS" id="TrissinR">
    <property type="organism name" value="fly"/>
</dbReference>
<dbReference type="GenomeRNAi" id="33812"/>
<dbReference type="PRO" id="PR:Q9VML9"/>
<dbReference type="Proteomes" id="UP000000803">
    <property type="component" value="Chromosome 2L"/>
</dbReference>
<dbReference type="Bgee" id="FBgn0085410">
    <property type="expression patterns" value="Expressed in adult olfactory receptor neuron Or47b (Drosophila) in antenna and 79 other cell types or tissues"/>
</dbReference>
<dbReference type="ExpressionAtlas" id="Q9VML9">
    <property type="expression patterns" value="baseline and differential"/>
</dbReference>
<dbReference type="GO" id="GO:0016020">
    <property type="term" value="C:membrane"/>
    <property type="evidence" value="ECO:0000250"/>
    <property type="project" value="FlyBase"/>
</dbReference>
<dbReference type="GO" id="GO:0005886">
    <property type="term" value="C:plasma membrane"/>
    <property type="evidence" value="ECO:0000314"/>
    <property type="project" value="FlyBase"/>
</dbReference>
<dbReference type="GO" id="GO:0008528">
    <property type="term" value="F:G protein-coupled peptide receptor activity"/>
    <property type="evidence" value="ECO:0000353"/>
    <property type="project" value="FlyBase"/>
</dbReference>
<dbReference type="GO" id="GO:0004930">
    <property type="term" value="F:G protein-coupled receptor activity"/>
    <property type="evidence" value="ECO:0000318"/>
    <property type="project" value="GO_Central"/>
</dbReference>
<dbReference type="GO" id="GO:0008188">
    <property type="term" value="F:neuropeptide receptor activity"/>
    <property type="evidence" value="ECO:0000255"/>
    <property type="project" value="FlyBase"/>
</dbReference>
<dbReference type="GO" id="GO:0032870">
    <property type="term" value="P:cellular response to hormone stimulus"/>
    <property type="evidence" value="ECO:0000318"/>
    <property type="project" value="GO_Central"/>
</dbReference>
<dbReference type="GO" id="GO:0007186">
    <property type="term" value="P:G protein-coupled receptor signaling pathway"/>
    <property type="evidence" value="ECO:0000314"/>
    <property type="project" value="FlyBase"/>
</dbReference>
<dbReference type="CDD" id="cd15012">
    <property type="entry name" value="7tmA_Trissin_R"/>
    <property type="match status" value="1"/>
</dbReference>
<dbReference type="FunFam" id="1.20.1070.10:FF:000304">
    <property type="entry name" value="Trissin receptor, isoform C"/>
    <property type="match status" value="1"/>
</dbReference>
<dbReference type="FunFam" id="1.20.1070.10:FF:000425">
    <property type="entry name" value="Trissin receptor, isoform C"/>
    <property type="match status" value="1"/>
</dbReference>
<dbReference type="Gene3D" id="1.20.1070.10">
    <property type="entry name" value="Rhodopsin 7-helix transmembrane proteins"/>
    <property type="match status" value="2"/>
</dbReference>
<dbReference type="InterPro" id="IPR000276">
    <property type="entry name" value="GPCR_Rhodpsn"/>
</dbReference>
<dbReference type="InterPro" id="IPR017452">
    <property type="entry name" value="GPCR_Rhodpsn_7TM"/>
</dbReference>
<dbReference type="PANTHER" id="PTHR24243">
    <property type="entry name" value="G-PROTEIN COUPLED RECEPTOR"/>
    <property type="match status" value="1"/>
</dbReference>
<dbReference type="PANTHER" id="PTHR24243:SF224">
    <property type="entry name" value="G-PROTEIN COUPLED RECEPTOR 19-RELATED"/>
    <property type="match status" value="1"/>
</dbReference>
<dbReference type="Pfam" id="PF00001">
    <property type="entry name" value="7tm_1"/>
    <property type="match status" value="1"/>
</dbReference>
<dbReference type="PRINTS" id="PR00237">
    <property type="entry name" value="GPCRRHODOPSN"/>
</dbReference>
<dbReference type="SUPFAM" id="SSF81321">
    <property type="entry name" value="Family A G protein-coupled receptor-like"/>
    <property type="match status" value="1"/>
</dbReference>
<dbReference type="PROSITE" id="PS00237">
    <property type="entry name" value="G_PROTEIN_RECEP_F1_1"/>
    <property type="match status" value="1"/>
</dbReference>
<dbReference type="PROSITE" id="PS50262">
    <property type="entry name" value="G_PROTEIN_RECEP_F1_2"/>
    <property type="match status" value="1"/>
</dbReference>
<sequence length="669" mass="74486">MIMTMMQTVRAWQQESDVEHRKQHKQRWRPDGAHISAAYDLNSDNDDGHHRVVHNQNNGSPNSSPNQSTSAFRQRQPHHPPTGQQPPRLPCTVTHFSAHWKTLLILLTLLSASTLTASANVTSTISPPINGSSTDYILLYGESTTSLVPALTTGLSGDGSGAVIEDEEDAEKASEYIFDRTDVRIIFITLYTLVFCCCFFGNLLVILVVTLSRRLRSITNFFLANLAFADFCVGLFCVMQNLSIYLIESWVFGEFLCRMYQFVHSLSYTASIFILVVICMERYFAIVHPITCKQILTAARLRMVIVTVWITSAVYSTPKFVFSKTIKNIHTQDGQEEEICVLDREMFNSKLLDMINFVLLYVMPLLVMTVLYSKIAIALWRSSRGLTPHVVQHQHQQPQQPSCQDIGMGMHNSMYHHHPHHHHHHHQHHQLQSAASSAGVVGVGLGGGGGGGPGPSLASGGSSTTSLSRKQSSKYEKRGVSITESQLDNCKVSLEADRPIVSACRKTSFYHHGHAHHQRAGNASVGGGSGGAGAGATHMSHSSSNVLRARRGVVRMLIIFVLTFALCNLPYHARKMWQYWSRSYRGDSNFNALLTPLTFLVTYFNSGVNPLLYAFLSRNFRKGMKELLLCSWKKGKGKSSSNSSMHHKRKALQTHSLPTDTTHIGNEQL</sequence>
<comment type="function">
    <text evidence="5">G-protein coupled receptor which is activated by the Trissin peptide in vitro, leading to increased intracellular calcium ion levels.</text>
</comment>
<comment type="subcellular location">
    <subcellularLocation>
        <location evidence="7">Cell membrane</location>
        <topology evidence="1">Multi-pass membrane protein</topology>
    </subcellularLocation>
</comment>
<comment type="similarity">
    <text evidence="3">Belongs to the G-protein coupled receptor 1 family.</text>
</comment>
<gene>
    <name evidence="9" type="primary">TrissinR</name>
    <name evidence="9" type="ORF">CG34381</name>
</gene>
<evidence type="ECO:0000255" key="1"/>
<evidence type="ECO:0000255" key="2">
    <source>
        <dbReference type="PROSITE-ProRule" id="PRU00498"/>
    </source>
</evidence>
<evidence type="ECO:0000255" key="3">
    <source>
        <dbReference type="PROSITE-ProRule" id="PRU00521"/>
    </source>
</evidence>
<evidence type="ECO:0000256" key="4">
    <source>
        <dbReference type="SAM" id="MobiDB-lite"/>
    </source>
</evidence>
<evidence type="ECO:0000269" key="5">
    <source>
    </source>
</evidence>
<evidence type="ECO:0000305" key="6"/>
<evidence type="ECO:0000305" key="7">
    <source>
    </source>
</evidence>
<evidence type="ECO:0000312" key="8">
    <source>
        <dbReference type="EMBL" id="ACJ23469.1"/>
    </source>
</evidence>
<evidence type="ECO:0000312" key="9">
    <source>
        <dbReference type="FlyBase" id="FBgn0085410"/>
    </source>
</evidence>
<evidence type="ECO:0000312" key="10">
    <source>
        <dbReference type="Proteomes" id="UP000000803"/>
    </source>
</evidence>